<evidence type="ECO:0000255" key="1">
    <source>
        <dbReference type="HAMAP-Rule" id="MF_00149"/>
    </source>
</evidence>
<sequence>MNKPLIHILPPQLANQIAAGEVVERPASVVKELVENSLDAGANQIQIDIEKGGAQLIRIRDNGCGIGKQDLALALARHATSKISSLEDLEMILSLGFRGEALASISSVSRLTLTSRPAGQAEAWQAYAQGREMEVEIQPASHPVGTTIEVANLFFNTPARRKFLRTDKTEFTHIDEVVRRIALAKPNIGFTLTHNGKTVRQYRKVQDNSVEQQQRRVAAICGDDFIQNAIHIDWQHGDLHLHGWIGLPNISRPQNDLCYSYVNGRMMRDKTINHAIRQAYEATDMPEGNYPAFVVFLDIDPSQVDVNVHPAKHEVRFHQGRLVHDFILQGVQTALQGQAEIDLTHQVNEPLPSYQRNTNRMAAGGNSFLASQQAVEFTENFAKPTASHMPNYSPRTSGVSKSAQKWYGELVSQPQNQSDNIQDLIEPKANFAPVIFAQEIDEAEPKPTQVVSAAIGHWQPLAIVQNQALLLKAEQQFYLLSLEKLARLRFQTQLTKGESQALLIPLNLSLDEQQTQRWQTLKTPLAELGFAISEKTWQGQIRLSVTQVPRLLREQNLQQILLSLFASQAVDLTEFFAKFAPIPTAYSLAEAVNWLAETEQTAKSELEKLKVAVDFSAFLARC</sequence>
<protein>
    <recommendedName>
        <fullName evidence="1">DNA mismatch repair protein MutL</fullName>
    </recommendedName>
</protein>
<dbReference type="EMBL" id="CP000687">
    <property type="protein sequence ID" value="ABY70550.1"/>
    <property type="molecule type" value="Genomic_DNA"/>
</dbReference>
<dbReference type="RefSeq" id="WP_012263464.1">
    <property type="nucleotide sequence ID" value="NC_010278.1"/>
</dbReference>
<dbReference type="SMR" id="B0BTY3"/>
<dbReference type="KEGG" id="apj:APJL_2005"/>
<dbReference type="HOGENOM" id="CLU_004131_5_1_6"/>
<dbReference type="Proteomes" id="UP000008547">
    <property type="component" value="Chromosome"/>
</dbReference>
<dbReference type="GO" id="GO:0032300">
    <property type="term" value="C:mismatch repair complex"/>
    <property type="evidence" value="ECO:0007669"/>
    <property type="project" value="InterPro"/>
</dbReference>
<dbReference type="GO" id="GO:0005524">
    <property type="term" value="F:ATP binding"/>
    <property type="evidence" value="ECO:0007669"/>
    <property type="project" value="InterPro"/>
</dbReference>
<dbReference type="GO" id="GO:0016887">
    <property type="term" value="F:ATP hydrolysis activity"/>
    <property type="evidence" value="ECO:0007669"/>
    <property type="project" value="InterPro"/>
</dbReference>
<dbReference type="GO" id="GO:0140664">
    <property type="term" value="F:ATP-dependent DNA damage sensor activity"/>
    <property type="evidence" value="ECO:0007669"/>
    <property type="project" value="InterPro"/>
</dbReference>
<dbReference type="GO" id="GO:0030983">
    <property type="term" value="F:mismatched DNA binding"/>
    <property type="evidence" value="ECO:0007669"/>
    <property type="project" value="InterPro"/>
</dbReference>
<dbReference type="GO" id="GO:0006298">
    <property type="term" value="P:mismatch repair"/>
    <property type="evidence" value="ECO:0007669"/>
    <property type="project" value="UniProtKB-UniRule"/>
</dbReference>
<dbReference type="CDD" id="cd16926">
    <property type="entry name" value="HATPase_MutL-MLH-PMS-like"/>
    <property type="match status" value="1"/>
</dbReference>
<dbReference type="CDD" id="cd03482">
    <property type="entry name" value="MutL_Trans_MutL"/>
    <property type="match status" value="1"/>
</dbReference>
<dbReference type="FunFam" id="3.30.230.10:FF:000013">
    <property type="entry name" value="DNA mismatch repair endonuclease MutL"/>
    <property type="match status" value="1"/>
</dbReference>
<dbReference type="FunFam" id="3.30.565.10:FF:000003">
    <property type="entry name" value="DNA mismatch repair endonuclease MutL"/>
    <property type="match status" value="1"/>
</dbReference>
<dbReference type="Gene3D" id="3.30.230.10">
    <property type="match status" value="1"/>
</dbReference>
<dbReference type="Gene3D" id="3.30.565.10">
    <property type="entry name" value="Histidine kinase-like ATPase, C-terminal domain"/>
    <property type="match status" value="1"/>
</dbReference>
<dbReference type="Gene3D" id="3.30.1540.20">
    <property type="entry name" value="MutL, C-terminal domain, dimerisation subdomain"/>
    <property type="match status" value="1"/>
</dbReference>
<dbReference type="Gene3D" id="3.30.1370.100">
    <property type="entry name" value="MutL, C-terminal domain, regulatory subdomain"/>
    <property type="match status" value="1"/>
</dbReference>
<dbReference type="HAMAP" id="MF_00149">
    <property type="entry name" value="DNA_mis_repair"/>
    <property type="match status" value="1"/>
</dbReference>
<dbReference type="InterPro" id="IPR014762">
    <property type="entry name" value="DNA_mismatch_repair_CS"/>
</dbReference>
<dbReference type="InterPro" id="IPR020667">
    <property type="entry name" value="DNA_mismatch_repair_MutL"/>
</dbReference>
<dbReference type="InterPro" id="IPR013507">
    <property type="entry name" value="DNA_mismatch_S5_2-like"/>
</dbReference>
<dbReference type="InterPro" id="IPR036890">
    <property type="entry name" value="HATPase_C_sf"/>
</dbReference>
<dbReference type="InterPro" id="IPR002099">
    <property type="entry name" value="MutL/Mlh/PMS"/>
</dbReference>
<dbReference type="InterPro" id="IPR038973">
    <property type="entry name" value="MutL/Mlh/Pms-like"/>
</dbReference>
<dbReference type="InterPro" id="IPR014790">
    <property type="entry name" value="MutL_C"/>
</dbReference>
<dbReference type="InterPro" id="IPR042120">
    <property type="entry name" value="MutL_C_dimsub"/>
</dbReference>
<dbReference type="InterPro" id="IPR042121">
    <property type="entry name" value="MutL_C_regsub"/>
</dbReference>
<dbReference type="InterPro" id="IPR037198">
    <property type="entry name" value="MutL_C_sf"/>
</dbReference>
<dbReference type="InterPro" id="IPR020568">
    <property type="entry name" value="Ribosomal_Su5_D2-typ_SF"/>
</dbReference>
<dbReference type="InterPro" id="IPR014721">
    <property type="entry name" value="Ribsml_uS5_D2-typ_fold_subgr"/>
</dbReference>
<dbReference type="NCBIfam" id="TIGR00585">
    <property type="entry name" value="mutl"/>
    <property type="match status" value="1"/>
</dbReference>
<dbReference type="NCBIfam" id="NF000948">
    <property type="entry name" value="PRK00095.1-1"/>
    <property type="match status" value="1"/>
</dbReference>
<dbReference type="PANTHER" id="PTHR10073">
    <property type="entry name" value="DNA MISMATCH REPAIR PROTEIN MLH, PMS, MUTL"/>
    <property type="match status" value="1"/>
</dbReference>
<dbReference type="PANTHER" id="PTHR10073:SF12">
    <property type="entry name" value="DNA MISMATCH REPAIR PROTEIN MLH1"/>
    <property type="match status" value="1"/>
</dbReference>
<dbReference type="Pfam" id="PF01119">
    <property type="entry name" value="DNA_mis_repair"/>
    <property type="match status" value="1"/>
</dbReference>
<dbReference type="Pfam" id="PF13589">
    <property type="entry name" value="HATPase_c_3"/>
    <property type="match status" value="1"/>
</dbReference>
<dbReference type="Pfam" id="PF08676">
    <property type="entry name" value="MutL_C"/>
    <property type="match status" value="1"/>
</dbReference>
<dbReference type="SMART" id="SM01340">
    <property type="entry name" value="DNA_mis_repair"/>
    <property type="match status" value="1"/>
</dbReference>
<dbReference type="SMART" id="SM00853">
    <property type="entry name" value="MutL_C"/>
    <property type="match status" value="1"/>
</dbReference>
<dbReference type="SUPFAM" id="SSF55874">
    <property type="entry name" value="ATPase domain of HSP90 chaperone/DNA topoisomerase II/histidine kinase"/>
    <property type="match status" value="1"/>
</dbReference>
<dbReference type="SUPFAM" id="SSF118116">
    <property type="entry name" value="DNA mismatch repair protein MutL"/>
    <property type="match status" value="1"/>
</dbReference>
<dbReference type="SUPFAM" id="SSF54211">
    <property type="entry name" value="Ribosomal protein S5 domain 2-like"/>
    <property type="match status" value="1"/>
</dbReference>
<dbReference type="PROSITE" id="PS00058">
    <property type="entry name" value="DNA_MISMATCH_REPAIR_1"/>
    <property type="match status" value="1"/>
</dbReference>
<accession>B0BTY3</accession>
<feature type="chain" id="PRO_1000096622" description="DNA mismatch repair protein MutL">
    <location>
        <begin position="1"/>
        <end position="622"/>
    </location>
</feature>
<keyword id="KW-0227">DNA damage</keyword>
<keyword id="KW-0234">DNA repair</keyword>
<name>MUTL_ACTPJ</name>
<gene>
    <name evidence="1" type="primary">mutL</name>
    <name type="ordered locus">APJL_2005</name>
</gene>
<reference key="1">
    <citation type="journal article" date="2008" name="PLoS ONE">
        <title>Genome biology of Actinobacillus pleuropneumoniae JL03, an isolate of serotype 3 prevalent in China.</title>
        <authorList>
            <person name="Xu Z."/>
            <person name="Zhou Y."/>
            <person name="Li L."/>
            <person name="Zhou R."/>
            <person name="Xiao S."/>
            <person name="Wan Y."/>
            <person name="Zhang S."/>
            <person name="Wang K."/>
            <person name="Li W."/>
            <person name="Li L."/>
            <person name="Jin H."/>
            <person name="Kang M."/>
            <person name="Dalai B."/>
            <person name="Li T."/>
            <person name="Liu L."/>
            <person name="Cheng Y."/>
            <person name="Zhang L."/>
            <person name="Xu T."/>
            <person name="Zheng H."/>
            <person name="Pu S."/>
            <person name="Wang B."/>
            <person name="Gu W."/>
            <person name="Zhang X.L."/>
            <person name="Zhu G.-F."/>
            <person name="Wang S."/>
            <person name="Zhao G.-P."/>
            <person name="Chen H."/>
        </authorList>
    </citation>
    <scope>NUCLEOTIDE SEQUENCE [LARGE SCALE GENOMIC DNA]</scope>
    <source>
        <strain>JL03</strain>
    </source>
</reference>
<organism>
    <name type="scientific">Actinobacillus pleuropneumoniae serotype 3 (strain JL03)</name>
    <dbReference type="NCBI Taxonomy" id="434271"/>
    <lineage>
        <taxon>Bacteria</taxon>
        <taxon>Pseudomonadati</taxon>
        <taxon>Pseudomonadota</taxon>
        <taxon>Gammaproteobacteria</taxon>
        <taxon>Pasteurellales</taxon>
        <taxon>Pasteurellaceae</taxon>
        <taxon>Actinobacillus</taxon>
    </lineage>
</organism>
<proteinExistence type="inferred from homology"/>
<comment type="function">
    <text evidence="1">This protein is involved in the repair of mismatches in DNA. It is required for dam-dependent methyl-directed DNA mismatch repair. May act as a 'molecular matchmaker', a protein that promotes the formation of a stable complex between two or more DNA-binding proteins in an ATP-dependent manner without itself being part of a final effector complex.</text>
</comment>
<comment type="similarity">
    <text evidence="1">Belongs to the DNA mismatch repair MutL/HexB family.</text>
</comment>